<reference key="1">
    <citation type="submission" date="2007-03" db="EMBL/GenBank/DDBJ databases">
        <title>Sequencing analysis of Draba nemoroza chloroplast DNA.</title>
        <authorList>
            <person name="Hosouchi T."/>
            <person name="Tsuruoka H."/>
            <person name="Kotani H."/>
        </authorList>
    </citation>
    <scope>NUCLEOTIDE SEQUENCE [LARGE SCALE GENOMIC DNA]</scope>
</reference>
<name>RR2_DRANE</name>
<proteinExistence type="inferred from homology"/>
<organism>
    <name type="scientific">Draba nemorosa</name>
    <name type="common">Woodland whitlowgrass</name>
    <dbReference type="NCBI Taxonomy" id="171822"/>
    <lineage>
        <taxon>Eukaryota</taxon>
        <taxon>Viridiplantae</taxon>
        <taxon>Streptophyta</taxon>
        <taxon>Embryophyta</taxon>
        <taxon>Tracheophyta</taxon>
        <taxon>Spermatophyta</taxon>
        <taxon>Magnoliopsida</taxon>
        <taxon>eudicotyledons</taxon>
        <taxon>Gunneridae</taxon>
        <taxon>Pentapetalae</taxon>
        <taxon>rosids</taxon>
        <taxon>malvids</taxon>
        <taxon>Brassicales</taxon>
        <taxon>Brassicaceae</taxon>
        <taxon>Arabideae</taxon>
        <taxon>Draba</taxon>
    </lineage>
</organism>
<dbReference type="EMBL" id="AP009373">
    <property type="protein sequence ID" value="BAF50363.1"/>
    <property type="molecule type" value="Genomic_DNA"/>
</dbReference>
<dbReference type="RefSeq" id="YP_001123539.1">
    <property type="nucleotide sequence ID" value="NC_009272.1"/>
</dbReference>
<dbReference type="SMR" id="A4QL08"/>
<dbReference type="GeneID" id="4964768"/>
<dbReference type="GO" id="GO:0009507">
    <property type="term" value="C:chloroplast"/>
    <property type="evidence" value="ECO:0007669"/>
    <property type="project" value="UniProtKB-SubCell"/>
</dbReference>
<dbReference type="GO" id="GO:0005763">
    <property type="term" value="C:mitochondrial small ribosomal subunit"/>
    <property type="evidence" value="ECO:0007669"/>
    <property type="project" value="TreeGrafter"/>
</dbReference>
<dbReference type="GO" id="GO:0003735">
    <property type="term" value="F:structural constituent of ribosome"/>
    <property type="evidence" value="ECO:0007669"/>
    <property type="project" value="InterPro"/>
</dbReference>
<dbReference type="GO" id="GO:0006412">
    <property type="term" value="P:translation"/>
    <property type="evidence" value="ECO:0007669"/>
    <property type="project" value="UniProtKB-UniRule"/>
</dbReference>
<dbReference type="CDD" id="cd01425">
    <property type="entry name" value="RPS2"/>
    <property type="match status" value="1"/>
</dbReference>
<dbReference type="FunFam" id="3.40.50.10490:FF:000101">
    <property type="match status" value="1"/>
</dbReference>
<dbReference type="FunFam" id="1.10.287.610:FF:000001">
    <property type="entry name" value="30S ribosomal protein S2"/>
    <property type="match status" value="1"/>
</dbReference>
<dbReference type="Gene3D" id="3.40.50.10490">
    <property type="entry name" value="Glucose-6-phosphate isomerase like protein, domain 1"/>
    <property type="match status" value="1"/>
</dbReference>
<dbReference type="Gene3D" id="1.10.287.610">
    <property type="entry name" value="Helix hairpin bin"/>
    <property type="match status" value="1"/>
</dbReference>
<dbReference type="HAMAP" id="MF_00291_B">
    <property type="entry name" value="Ribosomal_uS2_B"/>
    <property type="match status" value="1"/>
</dbReference>
<dbReference type="InterPro" id="IPR001865">
    <property type="entry name" value="Ribosomal_uS2"/>
</dbReference>
<dbReference type="InterPro" id="IPR005706">
    <property type="entry name" value="Ribosomal_uS2_bac/mit/plastid"/>
</dbReference>
<dbReference type="InterPro" id="IPR018130">
    <property type="entry name" value="Ribosomal_uS2_CS"/>
</dbReference>
<dbReference type="InterPro" id="IPR023591">
    <property type="entry name" value="Ribosomal_uS2_flav_dom_sf"/>
</dbReference>
<dbReference type="NCBIfam" id="TIGR01011">
    <property type="entry name" value="rpsB_bact"/>
    <property type="match status" value="1"/>
</dbReference>
<dbReference type="PANTHER" id="PTHR12534">
    <property type="entry name" value="30S RIBOSOMAL PROTEIN S2 PROKARYOTIC AND ORGANELLAR"/>
    <property type="match status" value="1"/>
</dbReference>
<dbReference type="PANTHER" id="PTHR12534:SF0">
    <property type="entry name" value="SMALL RIBOSOMAL SUBUNIT PROTEIN US2M"/>
    <property type="match status" value="1"/>
</dbReference>
<dbReference type="Pfam" id="PF00318">
    <property type="entry name" value="Ribosomal_S2"/>
    <property type="match status" value="1"/>
</dbReference>
<dbReference type="PRINTS" id="PR00395">
    <property type="entry name" value="RIBOSOMALS2"/>
</dbReference>
<dbReference type="SUPFAM" id="SSF52313">
    <property type="entry name" value="Ribosomal protein S2"/>
    <property type="match status" value="1"/>
</dbReference>
<dbReference type="PROSITE" id="PS00962">
    <property type="entry name" value="RIBOSOMAL_S2_1"/>
    <property type="match status" value="1"/>
</dbReference>
<dbReference type="PROSITE" id="PS00963">
    <property type="entry name" value="RIBOSOMAL_S2_2"/>
    <property type="match status" value="1"/>
</dbReference>
<keyword id="KW-0150">Chloroplast</keyword>
<keyword id="KW-0934">Plastid</keyword>
<keyword id="KW-0687">Ribonucleoprotein</keyword>
<keyword id="KW-0689">Ribosomal protein</keyword>
<geneLocation type="chloroplast"/>
<sequence>MTKRYWNIDLEEMMRAGVHFGHGTRKWNPRMAPYISAKRKGIHIINLTRTARFLSEACDLVFDAASRGKQFLIVGTKNKAADLVSRAAIRARCHYVNKKWLGGMLTNWSTTEKRLHKFRDLRTEQKTEGFNRLPKRDAAVLKRQLSRLETYLGGIKYMTGLPDIVIIIDQQEEYTALRECITLGIPTISLIDTNCNPDLADISIPANDDAIASIRFILNKLVFAICEGRSSYIQNY</sequence>
<comment type="subcellular location">
    <subcellularLocation>
        <location>Plastid</location>
        <location>Chloroplast</location>
    </subcellularLocation>
</comment>
<comment type="similarity">
    <text evidence="1">Belongs to the universal ribosomal protein uS2 family.</text>
</comment>
<gene>
    <name type="primary">rps2</name>
</gene>
<feature type="chain" id="PRO_0000352112" description="Small ribosomal subunit protein uS2c">
    <location>
        <begin position="1"/>
        <end position="236"/>
    </location>
</feature>
<accession>A4QL08</accession>
<evidence type="ECO:0000305" key="1"/>
<protein>
    <recommendedName>
        <fullName evidence="1">Small ribosomal subunit protein uS2c</fullName>
    </recommendedName>
    <alternativeName>
        <fullName>30S ribosomal protein S2, chloroplastic</fullName>
    </alternativeName>
</protein>